<feature type="chain" id="PRO_0000349830" description="tRNA-specific 2-thiouridylase MnmA">
    <location>
        <begin position="1"/>
        <end position="370"/>
    </location>
</feature>
<feature type="region of interest" description="Interaction with tRNA" evidence="1">
    <location>
        <begin position="161"/>
        <end position="163"/>
    </location>
</feature>
<feature type="region of interest" description="Interaction with tRNA" evidence="1">
    <location>
        <begin position="316"/>
        <end position="317"/>
    </location>
</feature>
<feature type="active site" description="Nucleophile" evidence="1">
    <location>
        <position position="112"/>
    </location>
</feature>
<feature type="active site" description="Cysteine persulfide intermediate" evidence="1">
    <location>
        <position position="211"/>
    </location>
</feature>
<feature type="binding site" evidence="1">
    <location>
        <begin position="25"/>
        <end position="32"/>
    </location>
    <ligand>
        <name>ATP</name>
        <dbReference type="ChEBI" id="CHEBI:30616"/>
    </ligand>
</feature>
<feature type="binding site" evidence="1">
    <location>
        <position position="51"/>
    </location>
    <ligand>
        <name>ATP</name>
        <dbReference type="ChEBI" id="CHEBI:30616"/>
    </ligand>
</feature>
<feature type="binding site" evidence="1">
    <location>
        <position position="137"/>
    </location>
    <ligand>
        <name>ATP</name>
        <dbReference type="ChEBI" id="CHEBI:30616"/>
    </ligand>
</feature>
<feature type="site" description="Interaction with tRNA" evidence="1">
    <location>
        <position position="138"/>
    </location>
</feature>
<feature type="site" description="Interaction with tRNA" evidence="1">
    <location>
        <position position="349"/>
    </location>
</feature>
<feature type="disulfide bond" description="Alternate" evidence="1">
    <location>
        <begin position="112"/>
        <end position="211"/>
    </location>
</feature>
<reference key="1">
    <citation type="journal article" date="2007" name="ISME J.">
        <title>Population level functional diversity in a microbial community revealed by comparative genomic and metagenomic analyses.</title>
        <authorList>
            <person name="Bhaya D."/>
            <person name="Grossman A.R."/>
            <person name="Steunou A.-S."/>
            <person name="Khuri N."/>
            <person name="Cohan F.M."/>
            <person name="Hamamura N."/>
            <person name="Melendrez M.C."/>
            <person name="Bateson M.M."/>
            <person name="Ward D.M."/>
            <person name="Heidelberg J.F."/>
        </authorList>
    </citation>
    <scope>NUCLEOTIDE SEQUENCE [LARGE SCALE GENOMIC DNA]</scope>
    <source>
        <strain>JA-3-3Ab</strain>
    </source>
</reference>
<accession>Q2JY34</accession>
<evidence type="ECO:0000255" key="1">
    <source>
        <dbReference type="HAMAP-Rule" id="MF_00144"/>
    </source>
</evidence>
<proteinExistence type="inferred from homology"/>
<comment type="function">
    <text evidence="1">Catalyzes the 2-thiolation of uridine at the wobble position (U34) of tRNA, leading to the formation of s(2)U34.</text>
</comment>
<comment type="catalytic activity">
    <reaction evidence="1">
        <text>S-sulfanyl-L-cysteinyl-[protein] + uridine(34) in tRNA + AH2 + ATP = 2-thiouridine(34) in tRNA + L-cysteinyl-[protein] + A + AMP + diphosphate + H(+)</text>
        <dbReference type="Rhea" id="RHEA:47032"/>
        <dbReference type="Rhea" id="RHEA-COMP:10131"/>
        <dbReference type="Rhea" id="RHEA-COMP:11726"/>
        <dbReference type="Rhea" id="RHEA-COMP:11727"/>
        <dbReference type="Rhea" id="RHEA-COMP:11728"/>
        <dbReference type="ChEBI" id="CHEBI:13193"/>
        <dbReference type="ChEBI" id="CHEBI:15378"/>
        <dbReference type="ChEBI" id="CHEBI:17499"/>
        <dbReference type="ChEBI" id="CHEBI:29950"/>
        <dbReference type="ChEBI" id="CHEBI:30616"/>
        <dbReference type="ChEBI" id="CHEBI:33019"/>
        <dbReference type="ChEBI" id="CHEBI:61963"/>
        <dbReference type="ChEBI" id="CHEBI:65315"/>
        <dbReference type="ChEBI" id="CHEBI:87170"/>
        <dbReference type="ChEBI" id="CHEBI:456215"/>
        <dbReference type="EC" id="2.8.1.13"/>
    </reaction>
</comment>
<comment type="subcellular location">
    <subcellularLocation>
        <location evidence="1">Cytoplasm</location>
    </subcellularLocation>
</comment>
<comment type="similarity">
    <text evidence="1">Belongs to the MnmA/TRMU family.</text>
</comment>
<protein>
    <recommendedName>
        <fullName evidence="1">tRNA-specific 2-thiouridylase MnmA</fullName>
        <ecNumber evidence="1">2.8.1.13</ecNumber>
    </recommendedName>
</protein>
<sequence>MATSPYPLVAPEIAGSPSRPRIVAALSGGVDSSTVAAILHEQGYAVEGVTLWLMRGKGQCCTDGLVDAAAICEQLGIPHHIVDSRELFQANIVDYLVAGYADGITPLPCSQCNKLVKFGPLLTYARETLGISQIATGHYARVRFNSELGRYQLLRAVDRQKDQSYFLYDLSQEHLAHSLFPLGNYTKAQTRQIAARYGLVTANKPESQDLCLIETYGSMRNFLDQHLGQRPGEIVDTQGRVLGSHQGIHHYTVGQRKGLGIASSRPLYVVRIDAAMNRVVVGEREEATQAEAWVRQVNWVSTPAPDEPLAVEVQVRYRTPAVPATLIPESPERVKLQFAEPQFGVTPGQAAVWYHGDLLLGGGILERPSP</sequence>
<dbReference type="EC" id="2.8.1.13" evidence="1"/>
<dbReference type="EMBL" id="CP000239">
    <property type="protein sequence ID" value="ABC98278.1"/>
    <property type="molecule type" value="Genomic_DNA"/>
</dbReference>
<dbReference type="RefSeq" id="WP_011428970.1">
    <property type="nucleotide sequence ID" value="NC_007775.1"/>
</dbReference>
<dbReference type="SMR" id="Q2JY34"/>
<dbReference type="STRING" id="321327.CYA_0046"/>
<dbReference type="KEGG" id="cya:CYA_0046"/>
<dbReference type="eggNOG" id="COG0482">
    <property type="taxonomic scope" value="Bacteria"/>
</dbReference>
<dbReference type="HOGENOM" id="CLU_035188_0_0_3"/>
<dbReference type="OrthoDB" id="9800696at2"/>
<dbReference type="Proteomes" id="UP000008818">
    <property type="component" value="Chromosome"/>
</dbReference>
<dbReference type="GO" id="GO:0005737">
    <property type="term" value="C:cytoplasm"/>
    <property type="evidence" value="ECO:0007669"/>
    <property type="project" value="UniProtKB-SubCell"/>
</dbReference>
<dbReference type="GO" id="GO:0005524">
    <property type="term" value="F:ATP binding"/>
    <property type="evidence" value="ECO:0007669"/>
    <property type="project" value="UniProtKB-KW"/>
</dbReference>
<dbReference type="GO" id="GO:0000049">
    <property type="term" value="F:tRNA binding"/>
    <property type="evidence" value="ECO:0007669"/>
    <property type="project" value="UniProtKB-KW"/>
</dbReference>
<dbReference type="GO" id="GO:0103016">
    <property type="term" value="F:tRNA-uridine 2-sulfurtransferase activity"/>
    <property type="evidence" value="ECO:0007669"/>
    <property type="project" value="UniProtKB-EC"/>
</dbReference>
<dbReference type="GO" id="GO:0002143">
    <property type="term" value="P:tRNA wobble position uridine thiolation"/>
    <property type="evidence" value="ECO:0007669"/>
    <property type="project" value="TreeGrafter"/>
</dbReference>
<dbReference type="CDD" id="cd01998">
    <property type="entry name" value="MnmA_TRMU-like"/>
    <property type="match status" value="1"/>
</dbReference>
<dbReference type="FunFam" id="2.30.30.280:FF:000001">
    <property type="entry name" value="tRNA-specific 2-thiouridylase MnmA"/>
    <property type="match status" value="1"/>
</dbReference>
<dbReference type="FunFam" id="2.40.30.10:FF:000023">
    <property type="entry name" value="tRNA-specific 2-thiouridylase MnmA"/>
    <property type="match status" value="1"/>
</dbReference>
<dbReference type="FunFam" id="3.40.50.620:FF:000302">
    <property type="entry name" value="tRNA-specific 2-thiouridylase MnmA"/>
    <property type="match status" value="1"/>
</dbReference>
<dbReference type="Gene3D" id="2.30.30.280">
    <property type="entry name" value="Adenine nucleotide alpha hydrolases-like domains"/>
    <property type="match status" value="1"/>
</dbReference>
<dbReference type="Gene3D" id="3.40.50.620">
    <property type="entry name" value="HUPs"/>
    <property type="match status" value="1"/>
</dbReference>
<dbReference type="Gene3D" id="2.40.30.10">
    <property type="entry name" value="Translation factors"/>
    <property type="match status" value="1"/>
</dbReference>
<dbReference type="HAMAP" id="MF_00144">
    <property type="entry name" value="tRNA_thiouridyl_MnmA"/>
    <property type="match status" value="1"/>
</dbReference>
<dbReference type="InterPro" id="IPR004506">
    <property type="entry name" value="MnmA-like"/>
</dbReference>
<dbReference type="InterPro" id="IPR046885">
    <property type="entry name" value="MnmA-like_C"/>
</dbReference>
<dbReference type="InterPro" id="IPR046884">
    <property type="entry name" value="MnmA-like_central"/>
</dbReference>
<dbReference type="InterPro" id="IPR023382">
    <property type="entry name" value="MnmA-like_central_sf"/>
</dbReference>
<dbReference type="InterPro" id="IPR014729">
    <property type="entry name" value="Rossmann-like_a/b/a_fold"/>
</dbReference>
<dbReference type="NCBIfam" id="NF001138">
    <property type="entry name" value="PRK00143.1"/>
    <property type="match status" value="1"/>
</dbReference>
<dbReference type="NCBIfam" id="TIGR00420">
    <property type="entry name" value="trmU"/>
    <property type="match status" value="1"/>
</dbReference>
<dbReference type="PANTHER" id="PTHR11933:SF5">
    <property type="entry name" value="MITOCHONDRIAL TRNA-SPECIFIC 2-THIOURIDYLASE 1"/>
    <property type="match status" value="1"/>
</dbReference>
<dbReference type="PANTHER" id="PTHR11933">
    <property type="entry name" value="TRNA 5-METHYLAMINOMETHYL-2-THIOURIDYLATE -METHYLTRANSFERASE"/>
    <property type="match status" value="1"/>
</dbReference>
<dbReference type="Pfam" id="PF03054">
    <property type="entry name" value="tRNA_Me_trans"/>
    <property type="match status" value="1"/>
</dbReference>
<dbReference type="Pfam" id="PF20258">
    <property type="entry name" value="tRNA_Me_trans_C"/>
    <property type="match status" value="1"/>
</dbReference>
<dbReference type="Pfam" id="PF20259">
    <property type="entry name" value="tRNA_Me_trans_M"/>
    <property type="match status" value="1"/>
</dbReference>
<dbReference type="SUPFAM" id="SSF52402">
    <property type="entry name" value="Adenine nucleotide alpha hydrolases-like"/>
    <property type="match status" value="1"/>
</dbReference>
<organism>
    <name type="scientific">Synechococcus sp. (strain JA-3-3Ab)</name>
    <name type="common">Cyanobacteria bacterium Yellowstone A-Prime</name>
    <dbReference type="NCBI Taxonomy" id="321327"/>
    <lineage>
        <taxon>Bacteria</taxon>
        <taxon>Bacillati</taxon>
        <taxon>Cyanobacteriota</taxon>
        <taxon>Cyanophyceae</taxon>
        <taxon>Synechococcales</taxon>
        <taxon>Synechococcaceae</taxon>
        <taxon>Synechococcus</taxon>
    </lineage>
</organism>
<gene>
    <name evidence="1" type="primary">mnmA</name>
    <name type="ordered locus">CYA_0046</name>
</gene>
<keyword id="KW-0067">ATP-binding</keyword>
<keyword id="KW-0963">Cytoplasm</keyword>
<keyword id="KW-1015">Disulfide bond</keyword>
<keyword id="KW-0547">Nucleotide-binding</keyword>
<keyword id="KW-0694">RNA-binding</keyword>
<keyword id="KW-0808">Transferase</keyword>
<keyword id="KW-0819">tRNA processing</keyword>
<keyword id="KW-0820">tRNA-binding</keyword>
<name>MNMA_SYNJA</name>